<sequence length="117" mass="13814">MRVKGGSTTRQRRRRWLKLAKGYWGHKSIGFKTAKQAVVKSWTYAFRDRKQRKRDFRKLWISRINAAARNQGISYSQLMHKIKQSNIEINRKMLAEMAIHHQSDFENIVKLAIAKSA</sequence>
<feature type="chain" id="PRO_0000177182" description="Large ribosomal subunit protein bL20">
    <location>
        <begin position="1"/>
        <end position="117"/>
    </location>
</feature>
<organism>
    <name type="scientific">Mesomycoplasma hyopneumoniae (strain 232)</name>
    <name type="common">Mycoplasma hyopneumoniae</name>
    <dbReference type="NCBI Taxonomy" id="295358"/>
    <lineage>
        <taxon>Bacteria</taxon>
        <taxon>Bacillati</taxon>
        <taxon>Mycoplasmatota</taxon>
        <taxon>Mycoplasmoidales</taxon>
        <taxon>Metamycoplasmataceae</taxon>
        <taxon>Mesomycoplasma</taxon>
    </lineage>
</organism>
<keyword id="KW-0687">Ribonucleoprotein</keyword>
<keyword id="KW-0689">Ribosomal protein</keyword>
<keyword id="KW-0694">RNA-binding</keyword>
<keyword id="KW-0699">rRNA-binding</keyword>
<name>RL20_MESH2</name>
<gene>
    <name evidence="1" type="primary">rplT</name>
    <name evidence="1" type="synonym">rpl20</name>
    <name type="ordered locus">mhp258</name>
</gene>
<proteinExistence type="inferred from homology"/>
<evidence type="ECO:0000255" key="1">
    <source>
        <dbReference type="HAMAP-Rule" id="MF_00382"/>
    </source>
</evidence>
<evidence type="ECO:0000305" key="2"/>
<comment type="function">
    <text evidence="1">Binds directly to 23S ribosomal RNA and is necessary for the in vitro assembly process of the 50S ribosomal subunit. It is not involved in the protein synthesizing functions of that subunit.</text>
</comment>
<comment type="similarity">
    <text evidence="1">Belongs to the bacterial ribosomal protein bL20 family.</text>
</comment>
<reference key="1">
    <citation type="journal article" date="2004" name="J. Bacteriol.">
        <title>The genome sequence of Mycoplasma hyopneumoniae strain 232, the agent of swine mycoplasmosis.</title>
        <authorList>
            <person name="Minion F.C."/>
            <person name="Lefkowitz E.J."/>
            <person name="Madsen M.L."/>
            <person name="Cleary B.J."/>
            <person name="Swartzell S.M."/>
            <person name="Mahairas G.G."/>
        </authorList>
    </citation>
    <scope>NUCLEOTIDE SEQUENCE [LARGE SCALE GENOMIC DNA]</scope>
    <source>
        <strain>232</strain>
    </source>
</reference>
<dbReference type="EMBL" id="AE017332">
    <property type="protein sequence ID" value="AAV27488.1"/>
    <property type="molecule type" value="Genomic_DNA"/>
</dbReference>
<dbReference type="RefSeq" id="WP_011206095.1">
    <property type="nucleotide sequence ID" value="NC_006360.1"/>
</dbReference>
<dbReference type="SMR" id="Q601E4"/>
<dbReference type="KEGG" id="mhy:mhp258"/>
<dbReference type="eggNOG" id="COG0292">
    <property type="taxonomic scope" value="Bacteria"/>
</dbReference>
<dbReference type="HOGENOM" id="CLU_123265_0_1_14"/>
<dbReference type="PhylomeDB" id="Q601E4"/>
<dbReference type="Proteomes" id="UP000006822">
    <property type="component" value="Chromosome"/>
</dbReference>
<dbReference type="GO" id="GO:1990904">
    <property type="term" value="C:ribonucleoprotein complex"/>
    <property type="evidence" value="ECO:0007669"/>
    <property type="project" value="UniProtKB-KW"/>
</dbReference>
<dbReference type="GO" id="GO:0005840">
    <property type="term" value="C:ribosome"/>
    <property type="evidence" value="ECO:0007669"/>
    <property type="project" value="UniProtKB-KW"/>
</dbReference>
<dbReference type="GO" id="GO:0019843">
    <property type="term" value="F:rRNA binding"/>
    <property type="evidence" value="ECO:0007669"/>
    <property type="project" value="UniProtKB-UniRule"/>
</dbReference>
<dbReference type="GO" id="GO:0003735">
    <property type="term" value="F:structural constituent of ribosome"/>
    <property type="evidence" value="ECO:0007669"/>
    <property type="project" value="InterPro"/>
</dbReference>
<dbReference type="GO" id="GO:0000027">
    <property type="term" value="P:ribosomal large subunit assembly"/>
    <property type="evidence" value="ECO:0007669"/>
    <property type="project" value="UniProtKB-UniRule"/>
</dbReference>
<dbReference type="GO" id="GO:0006412">
    <property type="term" value="P:translation"/>
    <property type="evidence" value="ECO:0007669"/>
    <property type="project" value="InterPro"/>
</dbReference>
<dbReference type="CDD" id="cd07026">
    <property type="entry name" value="Ribosomal_L20"/>
    <property type="match status" value="1"/>
</dbReference>
<dbReference type="FunFam" id="1.10.1900.20:FF:000001">
    <property type="entry name" value="50S ribosomal protein L20"/>
    <property type="match status" value="1"/>
</dbReference>
<dbReference type="Gene3D" id="6.10.160.10">
    <property type="match status" value="1"/>
</dbReference>
<dbReference type="Gene3D" id="1.10.1900.20">
    <property type="entry name" value="Ribosomal protein L20"/>
    <property type="match status" value="1"/>
</dbReference>
<dbReference type="HAMAP" id="MF_00382">
    <property type="entry name" value="Ribosomal_bL20"/>
    <property type="match status" value="1"/>
</dbReference>
<dbReference type="InterPro" id="IPR005813">
    <property type="entry name" value="Ribosomal_bL20"/>
</dbReference>
<dbReference type="InterPro" id="IPR049946">
    <property type="entry name" value="RIBOSOMAL_L20_CS"/>
</dbReference>
<dbReference type="InterPro" id="IPR035566">
    <property type="entry name" value="Ribosomal_protein_bL20_C"/>
</dbReference>
<dbReference type="NCBIfam" id="TIGR01032">
    <property type="entry name" value="rplT_bact"/>
    <property type="match status" value="1"/>
</dbReference>
<dbReference type="PANTHER" id="PTHR10986">
    <property type="entry name" value="39S RIBOSOMAL PROTEIN L20"/>
    <property type="match status" value="1"/>
</dbReference>
<dbReference type="Pfam" id="PF00453">
    <property type="entry name" value="Ribosomal_L20"/>
    <property type="match status" value="1"/>
</dbReference>
<dbReference type="PRINTS" id="PR00062">
    <property type="entry name" value="RIBOSOMALL20"/>
</dbReference>
<dbReference type="SUPFAM" id="SSF74731">
    <property type="entry name" value="Ribosomal protein L20"/>
    <property type="match status" value="1"/>
</dbReference>
<dbReference type="PROSITE" id="PS00937">
    <property type="entry name" value="RIBOSOMAL_L20"/>
    <property type="match status" value="1"/>
</dbReference>
<accession>Q601E4</accession>
<protein>
    <recommendedName>
        <fullName evidence="1">Large ribosomal subunit protein bL20</fullName>
    </recommendedName>
    <alternativeName>
        <fullName evidence="2">50S ribosomal protein L20</fullName>
    </alternativeName>
</protein>